<proteinExistence type="evidence at transcript level"/>
<sequence>MGYMIVEKHTSELLHLKRSPGIRSWSILVGIASVGLAAAYYSSDSILWKMFYVTGCFFVALQNMEEWEEAVFNKSKNEIELKTFSLYTMLLTLWKRGHEKVLLDLRHLRDVSVQEERVRYLGKGYLVVLRLATGFSYPLTQSATLGSRSDVEALAALLKRFLGLEELQQRLADDDYPDDDDGIEDLGLGDSSDSQDDPDGDDDEEH</sequence>
<feature type="chain" id="PRO_0000281421" description="Cytochrome b-245 chaperone 1 homolog">
    <location>
        <begin position="1"/>
        <end position="206"/>
    </location>
</feature>
<feature type="transmembrane region" description="Helical" evidence="3">
    <location>
        <begin position="21"/>
        <end position="43"/>
    </location>
</feature>
<feature type="region of interest" description="Disordered" evidence="4">
    <location>
        <begin position="172"/>
        <end position="206"/>
    </location>
</feature>
<feature type="compositionally biased region" description="Acidic residues" evidence="4">
    <location>
        <begin position="174"/>
        <end position="184"/>
    </location>
</feature>
<feature type="compositionally biased region" description="Acidic residues" evidence="4">
    <location>
        <begin position="193"/>
        <end position="206"/>
    </location>
</feature>
<reference key="1">
    <citation type="submission" date="2004-07" db="EMBL/GenBank/DDBJ databases">
        <authorList>
            <consortium name="NIH - Zebrafish Gene Collection (ZGC) project"/>
        </authorList>
    </citation>
    <scope>NUCLEOTIDE SEQUENCE [LARGE SCALE MRNA]</scope>
</reference>
<keyword id="KW-0143">Chaperone</keyword>
<keyword id="KW-0256">Endoplasmic reticulum</keyword>
<keyword id="KW-0391">Immunity</keyword>
<keyword id="KW-0399">Innate immunity</keyword>
<keyword id="KW-0472">Membrane</keyword>
<keyword id="KW-1185">Reference proteome</keyword>
<keyword id="KW-0812">Transmembrane</keyword>
<keyword id="KW-1133">Transmembrane helix</keyword>
<evidence type="ECO:0000250" key="1">
    <source>
        <dbReference type="UniProtKB" id="Q3TYS2"/>
    </source>
</evidence>
<evidence type="ECO:0000250" key="2">
    <source>
        <dbReference type="UniProtKB" id="Q9BQA9"/>
    </source>
</evidence>
<evidence type="ECO:0000255" key="3"/>
<evidence type="ECO:0000256" key="4">
    <source>
        <dbReference type="SAM" id="MobiDB-lite"/>
    </source>
</evidence>
<evidence type="ECO:0000305" key="5"/>
<accession>Q6DGA7</accession>
<gene>
    <name evidence="1" type="primary">cybc1</name>
    <name evidence="1" type="synonym">eros</name>
    <name type="ORF">zgc:91940</name>
</gene>
<organism>
    <name type="scientific">Danio rerio</name>
    <name type="common">Zebrafish</name>
    <name type="synonym">Brachydanio rerio</name>
    <dbReference type="NCBI Taxonomy" id="7955"/>
    <lineage>
        <taxon>Eukaryota</taxon>
        <taxon>Metazoa</taxon>
        <taxon>Chordata</taxon>
        <taxon>Craniata</taxon>
        <taxon>Vertebrata</taxon>
        <taxon>Euteleostomi</taxon>
        <taxon>Actinopterygii</taxon>
        <taxon>Neopterygii</taxon>
        <taxon>Teleostei</taxon>
        <taxon>Ostariophysi</taxon>
        <taxon>Cypriniformes</taxon>
        <taxon>Danionidae</taxon>
        <taxon>Danioninae</taxon>
        <taxon>Danio</taxon>
    </lineage>
</organism>
<protein>
    <recommendedName>
        <fullName evidence="5">Cytochrome b-245 chaperone 1 homolog</fullName>
    </recommendedName>
    <alternativeName>
        <fullName evidence="1">Essential for reactive oxygen species protein</fullName>
        <shortName evidence="1">Eros</shortName>
    </alternativeName>
</protein>
<dbReference type="EMBL" id="BC076444">
    <property type="protein sequence ID" value="AAH76444.1"/>
    <property type="molecule type" value="mRNA"/>
</dbReference>
<dbReference type="RefSeq" id="NP_001002669.1">
    <property type="nucleotide sequence ID" value="NM_001002669.1"/>
</dbReference>
<dbReference type="SMR" id="Q6DGA7"/>
<dbReference type="FunCoup" id="Q6DGA7">
    <property type="interactions" value="2364"/>
</dbReference>
<dbReference type="STRING" id="7955.ENSDARP00000096339"/>
<dbReference type="PaxDb" id="7955-ENSDARP00000096339"/>
<dbReference type="Ensembl" id="ENSDART00000105562">
    <property type="protein sequence ID" value="ENSDARP00000096339"/>
    <property type="gene ID" value="ENSDARG00000071414"/>
</dbReference>
<dbReference type="Ensembl" id="ENSDART00000191738">
    <property type="protein sequence ID" value="ENSDARP00000144672"/>
    <property type="gene ID" value="ENSDARG00000111331"/>
</dbReference>
<dbReference type="GeneID" id="436942"/>
<dbReference type="KEGG" id="dre:436942"/>
<dbReference type="AGR" id="ZFIN:ZDB-GENE-040718-418"/>
<dbReference type="CTD" id="79415"/>
<dbReference type="ZFIN" id="ZDB-GENE-040718-418">
    <property type="gene designation" value="cybc1"/>
</dbReference>
<dbReference type="eggNOG" id="ENOG502S06T">
    <property type="taxonomic scope" value="Eukaryota"/>
</dbReference>
<dbReference type="HOGENOM" id="CLU_100734_0_0_1"/>
<dbReference type="InParanoid" id="Q6DGA7"/>
<dbReference type="OMA" id="WKLFYIT"/>
<dbReference type="OrthoDB" id="10022724at2759"/>
<dbReference type="PhylomeDB" id="Q6DGA7"/>
<dbReference type="TreeFam" id="TF332389"/>
<dbReference type="PRO" id="PR:Q6DGA7"/>
<dbReference type="Proteomes" id="UP000000437">
    <property type="component" value="Alternate scaffold 12"/>
</dbReference>
<dbReference type="Proteomes" id="UP000000437">
    <property type="component" value="Chromosome 12"/>
</dbReference>
<dbReference type="Bgee" id="ENSDARG00000071414">
    <property type="expression patterns" value="Expressed in granulocyte and 19 other cell types or tissues"/>
</dbReference>
<dbReference type="GO" id="GO:0005783">
    <property type="term" value="C:endoplasmic reticulum"/>
    <property type="evidence" value="ECO:0000250"/>
    <property type="project" value="UniProtKB"/>
</dbReference>
<dbReference type="GO" id="GO:0005789">
    <property type="term" value="C:endoplasmic reticulum membrane"/>
    <property type="evidence" value="ECO:0007669"/>
    <property type="project" value="UniProtKB-SubCell"/>
</dbReference>
<dbReference type="GO" id="GO:0045087">
    <property type="term" value="P:innate immune response"/>
    <property type="evidence" value="ECO:0000250"/>
    <property type="project" value="UniProtKB"/>
</dbReference>
<dbReference type="GO" id="GO:0045728">
    <property type="term" value="P:respiratory burst after phagocytosis"/>
    <property type="evidence" value="ECO:0000250"/>
    <property type="project" value="UniProtKB"/>
</dbReference>
<dbReference type="InterPro" id="IPR027846">
    <property type="entry name" value="Cybc1"/>
</dbReference>
<dbReference type="PANTHER" id="PTHR31837">
    <property type="entry name" value="CYTOCHROME B-245 CHAPERONE 1"/>
    <property type="match status" value="1"/>
</dbReference>
<dbReference type="PANTHER" id="PTHR31837:SF3">
    <property type="entry name" value="CYTOCHROME B-245 CHAPERONE 1"/>
    <property type="match status" value="1"/>
</dbReference>
<dbReference type="Pfam" id="PF15169">
    <property type="entry name" value="Cybc1_Eros"/>
    <property type="match status" value="1"/>
</dbReference>
<name>CYBC1_DANRE</name>
<comment type="function">
    <text evidence="2">Functions as a chaperone necessary for a stable expression of the CYBA and CYBB subunits of the cytochrome b-245 heterodimer.</text>
</comment>
<comment type="subcellular location">
    <subcellularLocation>
        <location evidence="2">Endoplasmic reticulum membrane</location>
        <topology evidence="5">Single-pass membrane protein</topology>
    </subcellularLocation>
</comment>
<comment type="similarity">
    <text>Belongs to the CYBC1 family.</text>
</comment>